<organism>
    <name type="scientific">Escherichia coli O6:K15:H31 (strain 536 / UPEC)</name>
    <dbReference type="NCBI Taxonomy" id="362663"/>
    <lineage>
        <taxon>Bacteria</taxon>
        <taxon>Pseudomonadati</taxon>
        <taxon>Pseudomonadota</taxon>
        <taxon>Gammaproteobacteria</taxon>
        <taxon>Enterobacterales</taxon>
        <taxon>Enterobacteriaceae</taxon>
        <taxon>Escherichia</taxon>
    </lineage>
</organism>
<proteinExistence type="inferred from homology"/>
<dbReference type="EMBL" id="CP000247">
    <property type="protein sequence ID" value="ABG70599.1"/>
    <property type="molecule type" value="Genomic_DNA"/>
</dbReference>
<dbReference type="RefSeq" id="WP_000256450.1">
    <property type="nucleotide sequence ID" value="NC_008253.1"/>
</dbReference>
<dbReference type="SMR" id="Q0TEN0"/>
<dbReference type="GeneID" id="93774459"/>
<dbReference type="KEGG" id="ecp:ECP_2610"/>
<dbReference type="HOGENOM" id="CLU_100590_5_1_6"/>
<dbReference type="Proteomes" id="UP000009182">
    <property type="component" value="Chromosome"/>
</dbReference>
<dbReference type="GO" id="GO:0005737">
    <property type="term" value="C:cytoplasm"/>
    <property type="evidence" value="ECO:0007669"/>
    <property type="project" value="UniProtKB-ARBA"/>
</dbReference>
<dbReference type="GO" id="GO:0015935">
    <property type="term" value="C:small ribosomal subunit"/>
    <property type="evidence" value="ECO:0007669"/>
    <property type="project" value="TreeGrafter"/>
</dbReference>
<dbReference type="GO" id="GO:0003735">
    <property type="term" value="F:structural constituent of ribosome"/>
    <property type="evidence" value="ECO:0007669"/>
    <property type="project" value="InterPro"/>
</dbReference>
<dbReference type="GO" id="GO:0006412">
    <property type="term" value="P:translation"/>
    <property type="evidence" value="ECO:0007669"/>
    <property type="project" value="UniProtKB-UniRule"/>
</dbReference>
<dbReference type="FunFam" id="3.30.1320.10:FF:000001">
    <property type="entry name" value="30S ribosomal protein S16"/>
    <property type="match status" value="1"/>
</dbReference>
<dbReference type="Gene3D" id="3.30.1320.10">
    <property type="match status" value="1"/>
</dbReference>
<dbReference type="HAMAP" id="MF_00385">
    <property type="entry name" value="Ribosomal_bS16"/>
    <property type="match status" value="1"/>
</dbReference>
<dbReference type="InterPro" id="IPR000307">
    <property type="entry name" value="Ribosomal_bS16"/>
</dbReference>
<dbReference type="InterPro" id="IPR020592">
    <property type="entry name" value="Ribosomal_bS16_CS"/>
</dbReference>
<dbReference type="InterPro" id="IPR023803">
    <property type="entry name" value="Ribosomal_bS16_dom_sf"/>
</dbReference>
<dbReference type="NCBIfam" id="TIGR00002">
    <property type="entry name" value="S16"/>
    <property type="match status" value="1"/>
</dbReference>
<dbReference type="PANTHER" id="PTHR12919">
    <property type="entry name" value="30S RIBOSOMAL PROTEIN S16"/>
    <property type="match status" value="1"/>
</dbReference>
<dbReference type="PANTHER" id="PTHR12919:SF20">
    <property type="entry name" value="SMALL RIBOSOMAL SUBUNIT PROTEIN BS16M"/>
    <property type="match status" value="1"/>
</dbReference>
<dbReference type="Pfam" id="PF00886">
    <property type="entry name" value="Ribosomal_S16"/>
    <property type="match status" value="1"/>
</dbReference>
<dbReference type="SUPFAM" id="SSF54565">
    <property type="entry name" value="Ribosomal protein S16"/>
    <property type="match status" value="1"/>
</dbReference>
<dbReference type="PROSITE" id="PS00732">
    <property type="entry name" value="RIBOSOMAL_S16"/>
    <property type="match status" value="1"/>
</dbReference>
<accession>Q0TEN0</accession>
<keyword id="KW-0687">Ribonucleoprotein</keyword>
<keyword id="KW-0689">Ribosomal protein</keyword>
<gene>
    <name evidence="1" type="primary">rpsP</name>
    <name type="ordered locus">ECP_2610</name>
</gene>
<protein>
    <recommendedName>
        <fullName evidence="1">Small ribosomal subunit protein bS16</fullName>
    </recommendedName>
    <alternativeName>
        <fullName evidence="2">30S ribosomal protein S16</fullName>
    </alternativeName>
</protein>
<comment type="similarity">
    <text evidence="1">Belongs to the bacterial ribosomal protein bS16 family.</text>
</comment>
<reference key="1">
    <citation type="journal article" date="2006" name="Mol. Microbiol.">
        <title>Role of pathogenicity island-associated integrases in the genome plasticity of uropathogenic Escherichia coli strain 536.</title>
        <authorList>
            <person name="Hochhut B."/>
            <person name="Wilde C."/>
            <person name="Balling G."/>
            <person name="Middendorf B."/>
            <person name="Dobrindt U."/>
            <person name="Brzuszkiewicz E."/>
            <person name="Gottschalk G."/>
            <person name="Carniel E."/>
            <person name="Hacker J."/>
        </authorList>
    </citation>
    <scope>NUCLEOTIDE SEQUENCE [LARGE SCALE GENOMIC DNA]</scope>
    <source>
        <strain>536 / UPEC</strain>
    </source>
</reference>
<feature type="chain" id="PRO_1000049254" description="Small ribosomal subunit protein bS16">
    <location>
        <begin position="1"/>
        <end position="82"/>
    </location>
</feature>
<sequence>MVTIRLARHGAKKRPFYQVVVADSRNARNGRFIERVGFFNPIASEKEEGTRLDLDRIAHWVGQGATISDRVAALIKEVNKAA</sequence>
<evidence type="ECO:0000255" key="1">
    <source>
        <dbReference type="HAMAP-Rule" id="MF_00385"/>
    </source>
</evidence>
<evidence type="ECO:0000305" key="2"/>
<name>RS16_ECOL5</name>